<protein>
    <recommendedName>
        <fullName evidence="1">UPF0316 protein BH0621</fullName>
    </recommendedName>
</protein>
<proteinExistence type="inferred from homology"/>
<keyword id="KW-1003">Cell membrane</keyword>
<keyword id="KW-0472">Membrane</keyword>
<keyword id="KW-1185">Reference proteome</keyword>
<keyword id="KW-0812">Transmembrane</keyword>
<keyword id="KW-1133">Transmembrane helix</keyword>
<sequence>MVSFFMEHALTMILIILIINVVYVTLFTVRMIFTLKNQRYLAATVSMIEIIVYVLGLSLVLDNLDRIENLIAYAVGYGIGVITGMKVEEKLALGYITVNVITKEYEPDIPNTLRDKGYGVTNWVAYGREGERLMMEILTSRKSEADLYATIKKLDPKAFIISHEPKTFFGGFWVKGIRR</sequence>
<name>Y621_HALH5</name>
<dbReference type="EMBL" id="BA000004">
    <property type="protein sequence ID" value="BAB04340.1"/>
    <property type="molecule type" value="Genomic_DNA"/>
</dbReference>
<dbReference type="PIR" id="E83727">
    <property type="entry name" value="E83727"/>
</dbReference>
<dbReference type="RefSeq" id="WP_010896797.1">
    <property type="nucleotide sequence ID" value="NC_002570.2"/>
</dbReference>
<dbReference type="SMR" id="Q9KF65"/>
<dbReference type="STRING" id="272558.gene:10726495"/>
<dbReference type="GeneID" id="87596193"/>
<dbReference type="KEGG" id="bha:BH0621"/>
<dbReference type="eggNOG" id="COG4843">
    <property type="taxonomic scope" value="Bacteria"/>
</dbReference>
<dbReference type="HOGENOM" id="CLU_106166_1_0_9"/>
<dbReference type="OrthoDB" id="48231at2"/>
<dbReference type="Proteomes" id="UP000001258">
    <property type="component" value="Chromosome"/>
</dbReference>
<dbReference type="GO" id="GO:0005886">
    <property type="term" value="C:plasma membrane"/>
    <property type="evidence" value="ECO:0007669"/>
    <property type="project" value="UniProtKB-SubCell"/>
</dbReference>
<dbReference type="CDD" id="cd16381">
    <property type="entry name" value="YitT_C_like_1"/>
    <property type="match status" value="1"/>
</dbReference>
<dbReference type="HAMAP" id="MF_01515">
    <property type="entry name" value="UPF0316"/>
    <property type="match status" value="1"/>
</dbReference>
<dbReference type="InterPro" id="IPR019264">
    <property type="entry name" value="DUF2179"/>
</dbReference>
<dbReference type="InterPro" id="IPR044035">
    <property type="entry name" value="DUF5698"/>
</dbReference>
<dbReference type="InterPro" id="IPR022930">
    <property type="entry name" value="UPF0316"/>
</dbReference>
<dbReference type="NCBIfam" id="NF003194">
    <property type="entry name" value="PRK04164.1-5"/>
    <property type="match status" value="1"/>
</dbReference>
<dbReference type="PANTHER" id="PTHR40060">
    <property type="entry name" value="UPF0316 PROTEIN YEBE"/>
    <property type="match status" value="1"/>
</dbReference>
<dbReference type="PANTHER" id="PTHR40060:SF1">
    <property type="entry name" value="UPF0316 PROTEIN YEBE"/>
    <property type="match status" value="1"/>
</dbReference>
<dbReference type="Pfam" id="PF10035">
    <property type="entry name" value="DUF2179"/>
    <property type="match status" value="1"/>
</dbReference>
<dbReference type="Pfam" id="PF18955">
    <property type="entry name" value="DUF5698"/>
    <property type="match status" value="1"/>
</dbReference>
<accession>Q9KF65</accession>
<feature type="chain" id="PRO_0000171936" description="UPF0316 protein BH0621">
    <location>
        <begin position="1"/>
        <end position="179"/>
    </location>
</feature>
<feature type="transmembrane region" description="Helical" evidence="1">
    <location>
        <begin position="9"/>
        <end position="29"/>
    </location>
</feature>
<feature type="transmembrane region" description="Helical" evidence="1">
    <location>
        <begin position="41"/>
        <end position="61"/>
    </location>
</feature>
<feature type="transmembrane region" description="Helical" evidence="1">
    <location>
        <begin position="67"/>
        <end position="87"/>
    </location>
</feature>
<reference key="1">
    <citation type="journal article" date="2000" name="Nucleic Acids Res.">
        <title>Complete genome sequence of the alkaliphilic bacterium Bacillus halodurans and genomic sequence comparison with Bacillus subtilis.</title>
        <authorList>
            <person name="Takami H."/>
            <person name="Nakasone K."/>
            <person name="Takaki Y."/>
            <person name="Maeno G."/>
            <person name="Sasaki R."/>
            <person name="Masui N."/>
            <person name="Fuji F."/>
            <person name="Hirama C."/>
            <person name="Nakamura Y."/>
            <person name="Ogasawara N."/>
            <person name="Kuhara S."/>
            <person name="Horikoshi K."/>
        </authorList>
    </citation>
    <scope>NUCLEOTIDE SEQUENCE [LARGE SCALE GENOMIC DNA]</scope>
    <source>
        <strain>ATCC BAA-125 / DSM 18197 / FERM 7344 / JCM 9153 / C-125</strain>
    </source>
</reference>
<evidence type="ECO:0000255" key="1">
    <source>
        <dbReference type="HAMAP-Rule" id="MF_01515"/>
    </source>
</evidence>
<gene>
    <name type="ordered locus">BH0621</name>
</gene>
<organism>
    <name type="scientific">Halalkalibacterium halodurans (strain ATCC BAA-125 / DSM 18197 / FERM 7344 / JCM 9153 / C-125)</name>
    <name type="common">Bacillus halodurans</name>
    <dbReference type="NCBI Taxonomy" id="272558"/>
    <lineage>
        <taxon>Bacteria</taxon>
        <taxon>Bacillati</taxon>
        <taxon>Bacillota</taxon>
        <taxon>Bacilli</taxon>
        <taxon>Bacillales</taxon>
        <taxon>Bacillaceae</taxon>
        <taxon>Halalkalibacterium (ex Joshi et al. 2022)</taxon>
    </lineage>
</organism>
<comment type="subcellular location">
    <subcellularLocation>
        <location evidence="1">Cell membrane</location>
        <topology evidence="1">Multi-pass membrane protein</topology>
    </subcellularLocation>
</comment>
<comment type="similarity">
    <text evidence="1">Belongs to the UPF0316 family.</text>
</comment>